<proteinExistence type="inferred from homology"/>
<dbReference type="EC" id="2.7.4.3" evidence="1"/>
<dbReference type="EMBL" id="CP000438">
    <property type="protein sequence ID" value="ABJ12919.1"/>
    <property type="molecule type" value="Genomic_DNA"/>
</dbReference>
<dbReference type="RefSeq" id="WP_003092485.1">
    <property type="nucleotide sequence ID" value="NZ_CP034244.1"/>
</dbReference>
<dbReference type="SMR" id="Q02RF8"/>
<dbReference type="KEGG" id="pau:PA14_16700"/>
<dbReference type="PseudoCAP" id="PA14_16700"/>
<dbReference type="HOGENOM" id="CLU_032354_1_2_6"/>
<dbReference type="BioCyc" id="PAER208963:G1G74-1375-MONOMER"/>
<dbReference type="UniPathway" id="UPA00588">
    <property type="reaction ID" value="UER00649"/>
</dbReference>
<dbReference type="Proteomes" id="UP000000653">
    <property type="component" value="Chromosome"/>
</dbReference>
<dbReference type="GO" id="GO:0005737">
    <property type="term" value="C:cytoplasm"/>
    <property type="evidence" value="ECO:0007669"/>
    <property type="project" value="UniProtKB-SubCell"/>
</dbReference>
<dbReference type="GO" id="GO:0004017">
    <property type="term" value="F:adenylate kinase activity"/>
    <property type="evidence" value="ECO:0007669"/>
    <property type="project" value="UniProtKB-UniRule"/>
</dbReference>
<dbReference type="GO" id="GO:0005524">
    <property type="term" value="F:ATP binding"/>
    <property type="evidence" value="ECO:0007669"/>
    <property type="project" value="UniProtKB-UniRule"/>
</dbReference>
<dbReference type="GO" id="GO:0044209">
    <property type="term" value="P:AMP salvage"/>
    <property type="evidence" value="ECO:0007669"/>
    <property type="project" value="UniProtKB-UniRule"/>
</dbReference>
<dbReference type="CDD" id="cd01428">
    <property type="entry name" value="ADK"/>
    <property type="match status" value="1"/>
</dbReference>
<dbReference type="FunFam" id="3.40.50.300:FF:000106">
    <property type="entry name" value="Adenylate kinase mitochondrial"/>
    <property type="match status" value="1"/>
</dbReference>
<dbReference type="Gene3D" id="3.40.50.300">
    <property type="entry name" value="P-loop containing nucleotide triphosphate hydrolases"/>
    <property type="match status" value="1"/>
</dbReference>
<dbReference type="HAMAP" id="MF_00235">
    <property type="entry name" value="Adenylate_kinase_Adk"/>
    <property type="match status" value="1"/>
</dbReference>
<dbReference type="InterPro" id="IPR006259">
    <property type="entry name" value="Adenyl_kin_sub"/>
</dbReference>
<dbReference type="InterPro" id="IPR000850">
    <property type="entry name" value="Adenylat/UMP-CMP_kin"/>
</dbReference>
<dbReference type="InterPro" id="IPR033690">
    <property type="entry name" value="Adenylat_kinase_CS"/>
</dbReference>
<dbReference type="InterPro" id="IPR007862">
    <property type="entry name" value="Adenylate_kinase_lid-dom"/>
</dbReference>
<dbReference type="InterPro" id="IPR027417">
    <property type="entry name" value="P-loop_NTPase"/>
</dbReference>
<dbReference type="NCBIfam" id="TIGR01351">
    <property type="entry name" value="adk"/>
    <property type="match status" value="1"/>
</dbReference>
<dbReference type="NCBIfam" id="NF001379">
    <property type="entry name" value="PRK00279.1-1"/>
    <property type="match status" value="1"/>
</dbReference>
<dbReference type="NCBIfam" id="NF001380">
    <property type="entry name" value="PRK00279.1-2"/>
    <property type="match status" value="1"/>
</dbReference>
<dbReference type="NCBIfam" id="NF001381">
    <property type="entry name" value="PRK00279.1-3"/>
    <property type="match status" value="1"/>
</dbReference>
<dbReference type="NCBIfam" id="NF011100">
    <property type="entry name" value="PRK14527.1"/>
    <property type="match status" value="1"/>
</dbReference>
<dbReference type="PANTHER" id="PTHR23359">
    <property type="entry name" value="NUCLEOTIDE KINASE"/>
    <property type="match status" value="1"/>
</dbReference>
<dbReference type="Pfam" id="PF00406">
    <property type="entry name" value="ADK"/>
    <property type="match status" value="1"/>
</dbReference>
<dbReference type="Pfam" id="PF05191">
    <property type="entry name" value="ADK_lid"/>
    <property type="match status" value="1"/>
</dbReference>
<dbReference type="PRINTS" id="PR00094">
    <property type="entry name" value="ADENYLTKNASE"/>
</dbReference>
<dbReference type="SUPFAM" id="SSF52540">
    <property type="entry name" value="P-loop containing nucleoside triphosphate hydrolases"/>
    <property type="match status" value="1"/>
</dbReference>
<dbReference type="PROSITE" id="PS00113">
    <property type="entry name" value="ADENYLATE_KINASE"/>
    <property type="match status" value="1"/>
</dbReference>
<comment type="function">
    <text evidence="1">Catalyzes the reversible transfer of the terminal phosphate group between ATP and AMP. Plays an important role in cellular energy homeostasis and in adenine nucleotide metabolism.</text>
</comment>
<comment type="catalytic activity">
    <reaction evidence="1">
        <text>AMP + ATP = 2 ADP</text>
        <dbReference type="Rhea" id="RHEA:12973"/>
        <dbReference type="ChEBI" id="CHEBI:30616"/>
        <dbReference type="ChEBI" id="CHEBI:456215"/>
        <dbReference type="ChEBI" id="CHEBI:456216"/>
        <dbReference type="EC" id="2.7.4.3"/>
    </reaction>
</comment>
<comment type="pathway">
    <text evidence="1">Purine metabolism; AMP biosynthesis via salvage pathway; AMP from ADP: step 1/1.</text>
</comment>
<comment type="subunit">
    <text evidence="1">Monomer.</text>
</comment>
<comment type="subcellular location">
    <subcellularLocation>
        <location evidence="1">Cytoplasm</location>
    </subcellularLocation>
</comment>
<comment type="domain">
    <text evidence="1">Consists of three domains, a large central CORE domain and two small peripheral domains, NMPbind and LID, which undergo movements during catalysis. The LID domain closes over the site of phosphoryl transfer upon ATP binding. Assembling and dissambling the active center during each catalytic cycle provides an effective means to prevent ATP hydrolysis.</text>
</comment>
<comment type="similarity">
    <text evidence="1">Belongs to the adenylate kinase family.</text>
</comment>
<protein>
    <recommendedName>
        <fullName evidence="1">Adenylate kinase</fullName>
        <shortName evidence="1">AK</shortName>
        <ecNumber evidence="1">2.7.4.3</ecNumber>
    </recommendedName>
    <alternativeName>
        <fullName evidence="1">ATP-AMP transphosphorylase</fullName>
    </alternativeName>
    <alternativeName>
        <fullName evidence="1">ATP:AMP phosphotransferase</fullName>
    </alternativeName>
    <alternativeName>
        <fullName evidence="1">Adenylate monophosphate kinase</fullName>
    </alternativeName>
</protein>
<organism>
    <name type="scientific">Pseudomonas aeruginosa (strain UCBPP-PA14)</name>
    <dbReference type="NCBI Taxonomy" id="208963"/>
    <lineage>
        <taxon>Bacteria</taxon>
        <taxon>Pseudomonadati</taxon>
        <taxon>Pseudomonadota</taxon>
        <taxon>Gammaproteobacteria</taxon>
        <taxon>Pseudomonadales</taxon>
        <taxon>Pseudomonadaceae</taxon>
        <taxon>Pseudomonas</taxon>
    </lineage>
</organism>
<evidence type="ECO:0000255" key="1">
    <source>
        <dbReference type="HAMAP-Rule" id="MF_00235"/>
    </source>
</evidence>
<reference key="1">
    <citation type="journal article" date="2006" name="Genome Biol.">
        <title>Genomic analysis reveals that Pseudomonas aeruginosa virulence is combinatorial.</title>
        <authorList>
            <person name="Lee D.G."/>
            <person name="Urbach J.M."/>
            <person name="Wu G."/>
            <person name="Liberati N.T."/>
            <person name="Feinbaum R.L."/>
            <person name="Miyata S."/>
            <person name="Diggins L.T."/>
            <person name="He J."/>
            <person name="Saucier M."/>
            <person name="Deziel E."/>
            <person name="Friedman L."/>
            <person name="Li L."/>
            <person name="Grills G."/>
            <person name="Montgomery K."/>
            <person name="Kucherlapati R."/>
            <person name="Rahme L.G."/>
            <person name="Ausubel F.M."/>
        </authorList>
    </citation>
    <scope>NUCLEOTIDE SEQUENCE [LARGE SCALE GENOMIC DNA]</scope>
    <source>
        <strain>UCBPP-PA14</strain>
    </source>
</reference>
<gene>
    <name evidence="1" type="primary">adk</name>
    <name type="ordered locus">PA14_16700</name>
</gene>
<keyword id="KW-0067">ATP-binding</keyword>
<keyword id="KW-0963">Cytoplasm</keyword>
<keyword id="KW-0418">Kinase</keyword>
<keyword id="KW-0545">Nucleotide biosynthesis</keyword>
<keyword id="KW-0547">Nucleotide-binding</keyword>
<keyword id="KW-0808">Transferase</keyword>
<feature type="chain" id="PRO_1000058881" description="Adenylate kinase">
    <location>
        <begin position="1"/>
        <end position="215"/>
    </location>
</feature>
<feature type="region of interest" description="NMP" evidence="1">
    <location>
        <begin position="30"/>
        <end position="59"/>
    </location>
</feature>
<feature type="region of interest" description="LID" evidence="1">
    <location>
        <begin position="122"/>
        <end position="159"/>
    </location>
</feature>
<feature type="binding site" evidence="1">
    <location>
        <begin position="10"/>
        <end position="15"/>
    </location>
    <ligand>
        <name>ATP</name>
        <dbReference type="ChEBI" id="CHEBI:30616"/>
    </ligand>
</feature>
<feature type="binding site" evidence="1">
    <location>
        <position position="31"/>
    </location>
    <ligand>
        <name>AMP</name>
        <dbReference type="ChEBI" id="CHEBI:456215"/>
    </ligand>
</feature>
<feature type="binding site" evidence="1">
    <location>
        <position position="36"/>
    </location>
    <ligand>
        <name>AMP</name>
        <dbReference type="ChEBI" id="CHEBI:456215"/>
    </ligand>
</feature>
<feature type="binding site" evidence="1">
    <location>
        <begin position="57"/>
        <end position="59"/>
    </location>
    <ligand>
        <name>AMP</name>
        <dbReference type="ChEBI" id="CHEBI:456215"/>
    </ligand>
</feature>
<feature type="binding site" evidence="1">
    <location>
        <begin position="85"/>
        <end position="88"/>
    </location>
    <ligand>
        <name>AMP</name>
        <dbReference type="ChEBI" id="CHEBI:456215"/>
    </ligand>
</feature>
<feature type="binding site" evidence="1">
    <location>
        <position position="92"/>
    </location>
    <ligand>
        <name>AMP</name>
        <dbReference type="ChEBI" id="CHEBI:456215"/>
    </ligand>
</feature>
<feature type="binding site" evidence="1">
    <location>
        <position position="123"/>
    </location>
    <ligand>
        <name>ATP</name>
        <dbReference type="ChEBI" id="CHEBI:30616"/>
    </ligand>
</feature>
<feature type="binding site" evidence="1">
    <location>
        <begin position="132"/>
        <end position="133"/>
    </location>
    <ligand>
        <name>ATP</name>
        <dbReference type="ChEBI" id="CHEBI:30616"/>
    </ligand>
</feature>
<feature type="binding site" evidence="1">
    <location>
        <position position="156"/>
    </location>
    <ligand>
        <name>AMP</name>
        <dbReference type="ChEBI" id="CHEBI:456215"/>
    </ligand>
</feature>
<feature type="binding site" evidence="1">
    <location>
        <position position="167"/>
    </location>
    <ligand>
        <name>AMP</name>
        <dbReference type="ChEBI" id="CHEBI:456215"/>
    </ligand>
</feature>
<feature type="binding site" evidence="1">
    <location>
        <position position="201"/>
    </location>
    <ligand>
        <name>ATP</name>
        <dbReference type="ChEBI" id="CHEBI:30616"/>
    </ligand>
</feature>
<sequence length="215" mass="23107">MRVILLGAPGAGKGTQARFITEKFGIPQISTGDMLRAAVKAGSPLGQQVKGVMDSGGLVSDDIIIALIKERITEADCAKGFLFDGFPRTIPQAEALKDAGVTIDHVVEIAVDDEEIVSRIAGRRVHPASGRVYHTEHNPPKVAGKDDVTGEELIQREDDKEETVRHRLSVYHSQTKPLVDFYQKLSAAEGTPKYHSIAGVGSVEQITAKVLSALS</sequence>
<name>KAD_PSEAB</name>
<accession>Q02RF8</accession>